<comment type="function">
    <text evidence="1">DNA-dependent RNA polymerase catalyzes the transcription of DNA into RNA using the four ribonucleoside triphosphates as substrates.</text>
</comment>
<comment type="catalytic activity">
    <reaction evidence="1">
        <text>RNA(n) + a ribonucleoside 5'-triphosphate = RNA(n+1) + diphosphate</text>
        <dbReference type="Rhea" id="RHEA:21248"/>
        <dbReference type="Rhea" id="RHEA-COMP:14527"/>
        <dbReference type="Rhea" id="RHEA-COMP:17342"/>
        <dbReference type="ChEBI" id="CHEBI:33019"/>
        <dbReference type="ChEBI" id="CHEBI:61557"/>
        <dbReference type="ChEBI" id="CHEBI:140395"/>
        <dbReference type="EC" id="2.7.7.6"/>
    </reaction>
</comment>
<comment type="cofactor">
    <cofactor evidence="1">
        <name>Mg(2+)</name>
        <dbReference type="ChEBI" id="CHEBI:18420"/>
    </cofactor>
    <text evidence="1">Binds 1 Mg(2+) ion per subunit.</text>
</comment>
<comment type="cofactor">
    <cofactor evidence="1">
        <name>Zn(2+)</name>
        <dbReference type="ChEBI" id="CHEBI:29105"/>
    </cofactor>
    <text evidence="1">Binds 2 Zn(2+) ions per subunit.</text>
</comment>
<comment type="subunit">
    <text evidence="1">The RNAP catalytic core consists of 2 alpha, 1 beta, 1 beta' and 1 omega subunit. When a sigma factor is associated with the core the holoenzyme is formed, which can initiate transcription.</text>
</comment>
<comment type="similarity">
    <text evidence="1">Belongs to the RNA polymerase beta' chain family.</text>
</comment>
<gene>
    <name evidence="1" type="primary">rpoC</name>
    <name type="ordered locus">MGAS10270_Spy0086</name>
</gene>
<dbReference type="EC" id="2.7.7.6" evidence="1"/>
<dbReference type="EMBL" id="CP000260">
    <property type="protein sequence ID" value="ABF33151.1"/>
    <property type="molecule type" value="Genomic_DNA"/>
</dbReference>
<dbReference type="SMR" id="Q1JJ22"/>
<dbReference type="KEGG" id="sph:MGAS10270_Spy0086"/>
<dbReference type="HOGENOM" id="CLU_000524_3_1_9"/>
<dbReference type="Proteomes" id="UP000002436">
    <property type="component" value="Chromosome"/>
</dbReference>
<dbReference type="GO" id="GO:0000428">
    <property type="term" value="C:DNA-directed RNA polymerase complex"/>
    <property type="evidence" value="ECO:0007669"/>
    <property type="project" value="UniProtKB-KW"/>
</dbReference>
<dbReference type="GO" id="GO:0003677">
    <property type="term" value="F:DNA binding"/>
    <property type="evidence" value="ECO:0007669"/>
    <property type="project" value="UniProtKB-UniRule"/>
</dbReference>
<dbReference type="GO" id="GO:0003899">
    <property type="term" value="F:DNA-directed RNA polymerase activity"/>
    <property type="evidence" value="ECO:0007669"/>
    <property type="project" value="UniProtKB-UniRule"/>
</dbReference>
<dbReference type="GO" id="GO:0000287">
    <property type="term" value="F:magnesium ion binding"/>
    <property type="evidence" value="ECO:0007669"/>
    <property type="project" value="UniProtKB-UniRule"/>
</dbReference>
<dbReference type="GO" id="GO:0008270">
    <property type="term" value="F:zinc ion binding"/>
    <property type="evidence" value="ECO:0007669"/>
    <property type="project" value="UniProtKB-UniRule"/>
</dbReference>
<dbReference type="GO" id="GO:0006351">
    <property type="term" value="P:DNA-templated transcription"/>
    <property type="evidence" value="ECO:0007669"/>
    <property type="project" value="UniProtKB-UniRule"/>
</dbReference>
<dbReference type="CDD" id="cd02655">
    <property type="entry name" value="RNAP_beta'_C"/>
    <property type="match status" value="1"/>
</dbReference>
<dbReference type="CDD" id="cd01609">
    <property type="entry name" value="RNAP_beta'_N"/>
    <property type="match status" value="1"/>
</dbReference>
<dbReference type="FunFam" id="1.10.150.390:FF:000002">
    <property type="entry name" value="DNA-directed RNA polymerase subunit beta"/>
    <property type="match status" value="1"/>
</dbReference>
<dbReference type="FunFam" id="4.10.860.120:FF:000001">
    <property type="entry name" value="DNA-directed RNA polymerase subunit beta"/>
    <property type="match status" value="1"/>
</dbReference>
<dbReference type="Gene3D" id="1.10.132.30">
    <property type="match status" value="1"/>
</dbReference>
<dbReference type="Gene3D" id="1.10.150.390">
    <property type="match status" value="1"/>
</dbReference>
<dbReference type="Gene3D" id="1.10.1790.20">
    <property type="match status" value="1"/>
</dbReference>
<dbReference type="Gene3D" id="1.10.40.90">
    <property type="match status" value="1"/>
</dbReference>
<dbReference type="Gene3D" id="2.40.40.20">
    <property type="match status" value="1"/>
</dbReference>
<dbReference type="Gene3D" id="2.40.50.100">
    <property type="match status" value="1"/>
</dbReference>
<dbReference type="Gene3D" id="4.10.860.120">
    <property type="entry name" value="RNA polymerase II, clamp domain"/>
    <property type="match status" value="1"/>
</dbReference>
<dbReference type="Gene3D" id="1.10.274.100">
    <property type="entry name" value="RNA polymerase Rpb1, domain 3"/>
    <property type="match status" value="1"/>
</dbReference>
<dbReference type="HAMAP" id="MF_01322">
    <property type="entry name" value="RNApol_bact_RpoC"/>
    <property type="match status" value="1"/>
</dbReference>
<dbReference type="InterPro" id="IPR045867">
    <property type="entry name" value="DNA-dir_RpoC_beta_prime"/>
</dbReference>
<dbReference type="InterPro" id="IPR012754">
    <property type="entry name" value="DNA-dir_RpoC_beta_prime_bact"/>
</dbReference>
<dbReference type="InterPro" id="IPR000722">
    <property type="entry name" value="RNA_pol_asu"/>
</dbReference>
<dbReference type="InterPro" id="IPR006592">
    <property type="entry name" value="RNA_pol_N"/>
</dbReference>
<dbReference type="InterPro" id="IPR007080">
    <property type="entry name" value="RNA_pol_Rpb1_1"/>
</dbReference>
<dbReference type="InterPro" id="IPR007066">
    <property type="entry name" value="RNA_pol_Rpb1_3"/>
</dbReference>
<dbReference type="InterPro" id="IPR042102">
    <property type="entry name" value="RNA_pol_Rpb1_3_sf"/>
</dbReference>
<dbReference type="InterPro" id="IPR007083">
    <property type="entry name" value="RNA_pol_Rpb1_4"/>
</dbReference>
<dbReference type="InterPro" id="IPR007081">
    <property type="entry name" value="RNA_pol_Rpb1_5"/>
</dbReference>
<dbReference type="InterPro" id="IPR044893">
    <property type="entry name" value="RNA_pol_Rpb1_clamp_domain"/>
</dbReference>
<dbReference type="InterPro" id="IPR038120">
    <property type="entry name" value="Rpb1_funnel_sf"/>
</dbReference>
<dbReference type="NCBIfam" id="TIGR02386">
    <property type="entry name" value="rpoC_TIGR"/>
    <property type="match status" value="1"/>
</dbReference>
<dbReference type="PANTHER" id="PTHR19376">
    <property type="entry name" value="DNA-DIRECTED RNA POLYMERASE"/>
    <property type="match status" value="1"/>
</dbReference>
<dbReference type="PANTHER" id="PTHR19376:SF54">
    <property type="entry name" value="DNA-DIRECTED RNA POLYMERASE SUBUNIT BETA"/>
    <property type="match status" value="1"/>
</dbReference>
<dbReference type="Pfam" id="PF04997">
    <property type="entry name" value="RNA_pol_Rpb1_1"/>
    <property type="match status" value="1"/>
</dbReference>
<dbReference type="Pfam" id="PF00623">
    <property type="entry name" value="RNA_pol_Rpb1_2"/>
    <property type="match status" value="2"/>
</dbReference>
<dbReference type="Pfam" id="PF04983">
    <property type="entry name" value="RNA_pol_Rpb1_3"/>
    <property type="match status" value="1"/>
</dbReference>
<dbReference type="Pfam" id="PF05000">
    <property type="entry name" value="RNA_pol_Rpb1_4"/>
    <property type="match status" value="1"/>
</dbReference>
<dbReference type="Pfam" id="PF04998">
    <property type="entry name" value="RNA_pol_Rpb1_5"/>
    <property type="match status" value="1"/>
</dbReference>
<dbReference type="SMART" id="SM00663">
    <property type="entry name" value="RPOLA_N"/>
    <property type="match status" value="1"/>
</dbReference>
<dbReference type="SUPFAM" id="SSF64484">
    <property type="entry name" value="beta and beta-prime subunits of DNA dependent RNA-polymerase"/>
    <property type="match status" value="1"/>
</dbReference>
<organism>
    <name type="scientific">Streptococcus pyogenes serotype M2 (strain MGAS10270)</name>
    <dbReference type="NCBI Taxonomy" id="370552"/>
    <lineage>
        <taxon>Bacteria</taxon>
        <taxon>Bacillati</taxon>
        <taxon>Bacillota</taxon>
        <taxon>Bacilli</taxon>
        <taxon>Lactobacillales</taxon>
        <taxon>Streptococcaceae</taxon>
        <taxon>Streptococcus</taxon>
    </lineage>
</organism>
<protein>
    <recommendedName>
        <fullName evidence="1">DNA-directed RNA polymerase subunit beta'</fullName>
        <shortName evidence="1">RNAP subunit beta'</shortName>
        <ecNumber evidence="1">2.7.7.6</ecNumber>
    </recommendedName>
    <alternativeName>
        <fullName evidence="1">RNA polymerase subunit beta'</fullName>
    </alternativeName>
    <alternativeName>
        <fullName evidence="1">Transcriptase subunit beta'</fullName>
    </alternativeName>
</protein>
<name>RPOC_STRPD</name>
<proteinExistence type="inferred from homology"/>
<accession>Q1JJ22</accession>
<sequence>MVDVNRFKSMQITLASPSKVRSWSYGEVKKPETINYRTLKPEREGLFDEVIFGPTKDWECACGKYKRIRYKGIVCDRCGVEVTRAKVRRERMGHIELKAPVSHIWYFKGIPSRMGLTLDMSPRALEEVIYFAAYVVIDPKDTPLEPKSLLTEREYREKLQEYGHGSFVAKMGAEAIQDLLKRVDLAAEIAELKEELKSASGQKRIKAVRRLDVLDAFNKSGNKPEWMVLNILPVIPPDLRPMVQLDGGRFAASDLNDLYRRVINRNNRLARLLELNAPGIIVQNEKRMLQEAVDALIDNGRRGRPITGPGSRPLKSLSHMLKGKQGRFRQNLLGKRVDFSGRSVIAVGPTLKMYQCGVPREMAIELFKPFVMREIVAKEYAGNVKAAKRMVERGDERIWDILEEVIKEHPVLLNRAPTLHRLGIQAFEPVLIDGKALRLHPLVCEAYNADFDGDQMAIHVPLSEEAQAEARLLMLAAEHILNPKDGKPVVTPSQDMVLGNYYLTMEDAGREGEGMIFKDKDEAVMAYRNGYAHLHSRVGIAVDSMPNKPWKDNQRHKIMVTTVGKILFNDIMPEDLPYLQEPNNANLTEGTPDKYFLEPGQDIQEVIDGLDINVPFKKKNLGNIIAETFKRFRTTETSAFLDRLKDLGYYHSTLAGLTVGIADIPVIDNKAEIIDAAHHRVEEINKAFRRGLMTDDDRYVAVTTTWREAKEALEKRLIETQDPKNPIVMMMDSGARGNISNFSQLAGMRGLMAAPNGRIMELPILSNFREGLSVLEMFFSTHGARKGMTDTALKTADSGYLTRRLVDVAQDVIIREDDCGTDRGLLIRAITDGKEVTETLEERLQGRYTRKSVKHPETGEVLIGADQLITEDMARKIVDAGVEEVTIRSVFTCATRHGVCRHCYGINLATGDAVEVGEAVGTIAAQSIGEPGTQLTMRTFHTGGVASNTDITQGLPRIQEIFEARNPKGEAVITEVKGNVVEIEEDASTRTKKVYVQGKTGMGEYVVPFTARMKVEVGDEVNRGAALTEGSIQPKRLLEVRDTLSVETYLLAEVQKVYRSQGVEIGDKHVEVMVRQMLRKVRVMDPGDTDLLPGTLMDISDFTDANKDIVISGGIPATSRPVLMGITKASLETNSFLSAASFQETTRVLTDAAIRGKKDHLLGLKENVIIGKIIPAGTGMARYRNIEPQAMNEIEVIDHTEVSAEAVFTAEAE</sequence>
<keyword id="KW-0240">DNA-directed RNA polymerase</keyword>
<keyword id="KW-0460">Magnesium</keyword>
<keyword id="KW-0479">Metal-binding</keyword>
<keyword id="KW-0548">Nucleotidyltransferase</keyword>
<keyword id="KW-0804">Transcription</keyword>
<keyword id="KW-0808">Transferase</keyword>
<keyword id="KW-0862">Zinc</keyword>
<evidence type="ECO:0000255" key="1">
    <source>
        <dbReference type="HAMAP-Rule" id="MF_01322"/>
    </source>
</evidence>
<feature type="chain" id="PRO_0000308886" description="DNA-directed RNA polymerase subunit beta'">
    <location>
        <begin position="1"/>
        <end position="1213"/>
    </location>
</feature>
<feature type="binding site" evidence="1">
    <location>
        <position position="60"/>
    </location>
    <ligand>
        <name>Zn(2+)</name>
        <dbReference type="ChEBI" id="CHEBI:29105"/>
        <label>1</label>
    </ligand>
</feature>
<feature type="binding site" evidence="1">
    <location>
        <position position="62"/>
    </location>
    <ligand>
        <name>Zn(2+)</name>
        <dbReference type="ChEBI" id="CHEBI:29105"/>
        <label>1</label>
    </ligand>
</feature>
<feature type="binding site" evidence="1">
    <location>
        <position position="75"/>
    </location>
    <ligand>
        <name>Zn(2+)</name>
        <dbReference type="ChEBI" id="CHEBI:29105"/>
        <label>1</label>
    </ligand>
</feature>
<feature type="binding site" evidence="1">
    <location>
        <position position="78"/>
    </location>
    <ligand>
        <name>Zn(2+)</name>
        <dbReference type="ChEBI" id="CHEBI:29105"/>
        <label>1</label>
    </ligand>
</feature>
<feature type="binding site" evidence="1">
    <location>
        <position position="450"/>
    </location>
    <ligand>
        <name>Mg(2+)</name>
        <dbReference type="ChEBI" id="CHEBI:18420"/>
    </ligand>
</feature>
<feature type="binding site" evidence="1">
    <location>
        <position position="452"/>
    </location>
    <ligand>
        <name>Mg(2+)</name>
        <dbReference type="ChEBI" id="CHEBI:18420"/>
    </ligand>
</feature>
<feature type="binding site" evidence="1">
    <location>
        <position position="454"/>
    </location>
    <ligand>
        <name>Mg(2+)</name>
        <dbReference type="ChEBI" id="CHEBI:18420"/>
    </ligand>
</feature>
<feature type="binding site" evidence="1">
    <location>
        <position position="819"/>
    </location>
    <ligand>
        <name>Zn(2+)</name>
        <dbReference type="ChEBI" id="CHEBI:29105"/>
        <label>2</label>
    </ligand>
</feature>
<feature type="binding site" evidence="1">
    <location>
        <position position="893"/>
    </location>
    <ligand>
        <name>Zn(2+)</name>
        <dbReference type="ChEBI" id="CHEBI:29105"/>
        <label>2</label>
    </ligand>
</feature>
<feature type="binding site" evidence="1">
    <location>
        <position position="900"/>
    </location>
    <ligand>
        <name>Zn(2+)</name>
        <dbReference type="ChEBI" id="CHEBI:29105"/>
        <label>2</label>
    </ligand>
</feature>
<feature type="binding site" evidence="1">
    <location>
        <position position="903"/>
    </location>
    <ligand>
        <name>Zn(2+)</name>
        <dbReference type="ChEBI" id="CHEBI:29105"/>
        <label>2</label>
    </ligand>
</feature>
<reference key="1">
    <citation type="journal article" date="2006" name="Proc. Natl. Acad. Sci. U.S.A.">
        <title>Molecular genetic anatomy of inter- and intraserotype variation in the human bacterial pathogen group A Streptococcus.</title>
        <authorList>
            <person name="Beres S.B."/>
            <person name="Richter E.W."/>
            <person name="Nagiec M.J."/>
            <person name="Sumby P."/>
            <person name="Porcella S.F."/>
            <person name="DeLeo F.R."/>
            <person name="Musser J.M."/>
        </authorList>
    </citation>
    <scope>NUCLEOTIDE SEQUENCE [LARGE SCALE GENOMIC DNA]</scope>
    <source>
        <strain>MGAS10270</strain>
    </source>
</reference>